<comment type="function">
    <text evidence="1">Involved in pre-mRNA splicing as component of the U4/U6-U5 tri-snRNP complex, one of the building blocks of the spliceosome. Enhances dihydrotestosterone-induced transactivation activity of AR, as well as dexamethasone-induced transactivation activity of NR3C1, but does not affect estrogen-induced transactivation.</text>
</comment>
<comment type="subunit">
    <text evidence="1">Identified in the spliceosome B complex. Identified in the spliceosome C complex. Associates with the U5 snRNP particle. Component of the U4/U6-U5 tri-snRNP complex composed of the U4, U6 and U5 snRNAs and at least PRPF3, PRPF4, PRPF6, PRPF8, PRPF31, SNRNP200, TXNL4A, SNRNP40, DDX23, CD2BP2, PPIH, SNU13, EFTUD2, SART1 and USP39, LSm proteins LSm2-8 and Sm proteins. Interacts with ARAF1. Interacts with AR and NR3C1, but not ESR1, independently of the presence of hormones. Interacts with USH1G.</text>
</comment>
<comment type="subcellular location">
    <subcellularLocation>
        <location evidence="1">Nucleus</location>
        <location evidence="1">Nucleoplasm</location>
    </subcellularLocation>
    <subcellularLocation>
        <location evidence="1">Nucleus speckle</location>
    </subcellularLocation>
    <text evidence="1">Localized in splicing speckles.</text>
</comment>
<comment type="PTM">
    <text evidence="1">Phosphorylated by PRP4K during spliceosome assembly.</text>
</comment>
<keyword id="KW-0507">mRNA processing</keyword>
<keyword id="KW-0508">mRNA splicing</keyword>
<keyword id="KW-0539">Nucleus</keyword>
<keyword id="KW-0597">Phosphoprotein</keyword>
<keyword id="KW-1185">Reference proteome</keyword>
<keyword id="KW-0677">Repeat</keyword>
<keyword id="KW-0747">Spliceosome</keyword>
<gene>
    <name type="primary">PRPF6</name>
</gene>
<evidence type="ECO:0000250" key="1">
    <source>
        <dbReference type="UniProtKB" id="O94906"/>
    </source>
</evidence>
<evidence type="ECO:0000256" key="2">
    <source>
        <dbReference type="SAM" id="MobiDB-lite"/>
    </source>
</evidence>
<protein>
    <recommendedName>
        <fullName>Pre-mRNA-processing factor 6</fullName>
    </recommendedName>
    <alternativeName>
        <fullName>PRP6 homolog</fullName>
    </alternativeName>
    <alternativeName>
        <fullName>U5 snRNP-associated 102 kDa protein</fullName>
        <shortName>U5-102 kDa protein</shortName>
    </alternativeName>
</protein>
<feature type="chain" id="PRO_0000413095" description="Pre-mRNA-processing factor 6">
    <location>
        <begin position="1"/>
        <end position="941"/>
    </location>
</feature>
<feature type="repeat" description="HAT 1">
    <location>
        <begin position="384"/>
        <end position="416"/>
    </location>
</feature>
<feature type="repeat" description="HAT 2">
    <location>
        <begin position="418"/>
        <end position="444"/>
    </location>
</feature>
<feature type="repeat" description="HAT 3">
    <location>
        <begin position="445"/>
        <end position="476"/>
    </location>
</feature>
<feature type="repeat" description="HAT 4">
    <location>
        <begin position="554"/>
        <end position="586"/>
    </location>
</feature>
<feature type="repeat" description="HAT 5">
    <location>
        <begin position="588"/>
        <end position="620"/>
    </location>
</feature>
<feature type="repeat" description="HAT 6">
    <location>
        <begin position="622"/>
        <end position="654"/>
    </location>
</feature>
<feature type="repeat" description="HAT 7">
    <location>
        <begin position="689"/>
        <end position="721"/>
    </location>
</feature>
<feature type="repeat" description="HAT 8">
    <location>
        <begin position="723"/>
        <end position="755"/>
    </location>
</feature>
<feature type="repeat" description="HAT 9">
    <location>
        <begin position="855"/>
        <end position="887"/>
    </location>
</feature>
<feature type="region of interest" description="Disordered" evidence="2">
    <location>
        <begin position="1"/>
        <end position="79"/>
    </location>
</feature>
<feature type="compositionally biased region" description="Basic and acidic residues" evidence="2">
    <location>
        <begin position="39"/>
        <end position="65"/>
    </location>
</feature>
<feature type="compositionally biased region" description="Acidic residues" evidence="2">
    <location>
        <begin position="66"/>
        <end position="78"/>
    </location>
</feature>
<feature type="modified residue" description="Phosphoserine" evidence="1">
    <location>
        <position position="143"/>
    </location>
</feature>
<feature type="modified residue" description="Phosphothreonine" evidence="1">
    <location>
        <position position="180"/>
    </location>
</feature>
<feature type="modified residue" description="Phosphothreonine" evidence="1">
    <location>
        <position position="266"/>
    </location>
</feature>
<feature type="modified residue" description="Phosphothreonine" evidence="1">
    <location>
        <position position="275"/>
    </location>
</feature>
<feature type="modified residue" description="Phosphoserine" evidence="1">
    <location>
        <position position="279"/>
    </location>
</feature>
<name>PRP6_PONAB</name>
<organism>
    <name type="scientific">Pongo abelii</name>
    <name type="common">Sumatran orangutan</name>
    <name type="synonym">Pongo pygmaeus abelii</name>
    <dbReference type="NCBI Taxonomy" id="9601"/>
    <lineage>
        <taxon>Eukaryota</taxon>
        <taxon>Metazoa</taxon>
        <taxon>Chordata</taxon>
        <taxon>Craniata</taxon>
        <taxon>Vertebrata</taxon>
        <taxon>Euteleostomi</taxon>
        <taxon>Mammalia</taxon>
        <taxon>Eutheria</taxon>
        <taxon>Euarchontoglires</taxon>
        <taxon>Primates</taxon>
        <taxon>Haplorrhini</taxon>
        <taxon>Catarrhini</taxon>
        <taxon>Hominidae</taxon>
        <taxon>Pongo</taxon>
    </lineage>
</organism>
<reference key="1">
    <citation type="submission" date="2004-11" db="EMBL/GenBank/DDBJ databases">
        <authorList>
            <consortium name="The German cDNA consortium"/>
        </authorList>
    </citation>
    <scope>NUCLEOTIDE SEQUENCE [LARGE SCALE MRNA]</scope>
    <source>
        <tissue>Brain cortex</tissue>
    </source>
</reference>
<sequence length="941" mass="107002">MNKKKKPFLGMPAPLGYVPGLGRGATGFTTRSDIGPARDANDPVDDRHAPPGKRTVGDQMKKNQAADDDDEDLNDTNYDEFNGYAGSLFSSGPYEKDDEEADAIYAALDKRMDERRKERREQREKEEIEKYRMERPKIQQQFSDLKRKLAEVTEEEWLSIPEVGDARNKRQRNPRYEKLTPVPDSFFAKHLQTGENHTSVDPRQTQFGGLNTPYPGGLNTPYPGGMTPGLMTPGTGELDMRKIGQARNTLMDMRLSQVSDSVSGQTVVDPKGYLTDLNSMIPTHGGDINDIKKARLLLKSVRETNPHHPPAWIASARLEEVTGKLQVARNLIMKGTEMCPKSEDVWLEAARLQPGDTAKAVVAQAVRHLPQFVRIYIRAAELETDIRAKKRVLRKALEHVPNSVRLWKAAVELEEPEDARIMLSRAVECCPTSVELWLALARLETYENARKVLNKARENIPTDRHIWITAAKLEEANGNTQMVEKIIDRAITSLRANGVEINREQWIQDAEECDRAGSVATCQAVMRAVIGIGIEEEDRKHTWMEDADSCVAHNALECARAIYAYALQVFPSKKSVWLRAAYFGKNHGTRESLEALLQRAVAHCPKAEVLWLMGAKSKWLTGDVPAARSILALAFQANPNSEEIWLAAVKLESENDEYERARRLLAKARSSAPTARVFMKSVKLEWVQDNIRAAQDLCEEALRHYEDFPKLWMMKGQIEEQKEMMEKAREAYNQGLKKCPHSTPLWLLLSRLEEKIGQLTRTRAILEKSRLKNPKNPGLWLESVRLEYRAGLKNIANTLMAKALQECPNSGILWSEAIFLEARPQRRTKSVDALKKCEHDPHVLLAVAKLFWSQRKITKAREWFHRTVKIDSDLGDAWAFFYKFELQHGTEERQEEVRKRCESAEPRHGELWCAVSEDIANWQKKIGDILRLVAGRIKNTF</sequence>
<dbReference type="EMBL" id="CR858352">
    <property type="protein sequence ID" value="CAH90585.1"/>
    <property type="molecule type" value="mRNA"/>
</dbReference>
<dbReference type="RefSeq" id="NP_001125315.1">
    <property type="nucleotide sequence ID" value="NM_001131843.1"/>
</dbReference>
<dbReference type="SMR" id="Q5RCC2"/>
<dbReference type="STRING" id="9601.ENSPPYP00000012574"/>
<dbReference type="GeneID" id="100172214"/>
<dbReference type="KEGG" id="pon:100172214"/>
<dbReference type="CTD" id="24148"/>
<dbReference type="eggNOG" id="KOG0495">
    <property type="taxonomic scope" value="Eukaryota"/>
</dbReference>
<dbReference type="InParanoid" id="Q5RCC2"/>
<dbReference type="OrthoDB" id="440128at2759"/>
<dbReference type="Proteomes" id="UP000001595">
    <property type="component" value="Unplaced"/>
</dbReference>
<dbReference type="GO" id="GO:0071013">
    <property type="term" value="C:catalytic step 2 spliceosome"/>
    <property type="evidence" value="ECO:0007669"/>
    <property type="project" value="TreeGrafter"/>
</dbReference>
<dbReference type="GO" id="GO:0016607">
    <property type="term" value="C:nuclear speck"/>
    <property type="evidence" value="ECO:0000250"/>
    <property type="project" value="UniProtKB"/>
</dbReference>
<dbReference type="GO" id="GO:0071005">
    <property type="term" value="C:U2-type precatalytic spliceosome"/>
    <property type="evidence" value="ECO:0000250"/>
    <property type="project" value="UniProtKB"/>
</dbReference>
<dbReference type="GO" id="GO:0046540">
    <property type="term" value="C:U4/U6 x U5 tri-snRNP complex"/>
    <property type="evidence" value="ECO:0007669"/>
    <property type="project" value="TreeGrafter"/>
</dbReference>
<dbReference type="GO" id="GO:0030674">
    <property type="term" value="F:protein-macromolecule adaptor activity"/>
    <property type="evidence" value="ECO:0000250"/>
    <property type="project" value="UniProtKB"/>
</dbReference>
<dbReference type="GO" id="GO:0000398">
    <property type="term" value="P:mRNA splicing, via spliceosome"/>
    <property type="evidence" value="ECO:0000250"/>
    <property type="project" value="UniProtKB"/>
</dbReference>
<dbReference type="GO" id="GO:0000244">
    <property type="term" value="P:spliceosomal tri-snRNP complex assembly"/>
    <property type="evidence" value="ECO:0000250"/>
    <property type="project" value="UniProtKB"/>
</dbReference>
<dbReference type="FunFam" id="1.25.40.10:FF:000649">
    <property type="entry name" value="mRNA splicing factor (Prp1/Zer1), putative"/>
    <property type="match status" value="1"/>
</dbReference>
<dbReference type="FunFam" id="1.25.40.10:FF:000054">
    <property type="entry name" value="Pre-mRNA processing factor 6"/>
    <property type="match status" value="1"/>
</dbReference>
<dbReference type="FunFam" id="1.25.40.10:FF:000058">
    <property type="entry name" value="Pre-mRNA processing factor 6"/>
    <property type="match status" value="1"/>
</dbReference>
<dbReference type="FunFam" id="1.25.40.10:FF:003529">
    <property type="entry name" value="Uncharacterized protein"/>
    <property type="match status" value="1"/>
</dbReference>
<dbReference type="Gene3D" id="1.25.40.10">
    <property type="entry name" value="Tetratricopeptide repeat domain"/>
    <property type="match status" value="4"/>
</dbReference>
<dbReference type="InterPro" id="IPR003107">
    <property type="entry name" value="HAT"/>
</dbReference>
<dbReference type="InterPro" id="IPR010491">
    <property type="entry name" value="PRP1_N"/>
</dbReference>
<dbReference type="InterPro" id="IPR045075">
    <property type="entry name" value="Syf1-like"/>
</dbReference>
<dbReference type="InterPro" id="IPR011990">
    <property type="entry name" value="TPR-like_helical_dom_sf"/>
</dbReference>
<dbReference type="InterPro" id="IPR019734">
    <property type="entry name" value="TPR_rpt"/>
</dbReference>
<dbReference type="PANTHER" id="PTHR11246">
    <property type="entry name" value="PRE-MRNA SPLICING FACTOR"/>
    <property type="match status" value="1"/>
</dbReference>
<dbReference type="PANTHER" id="PTHR11246:SF1">
    <property type="entry name" value="PRE-MRNA-PROCESSING FACTOR 6"/>
    <property type="match status" value="1"/>
</dbReference>
<dbReference type="Pfam" id="PF06424">
    <property type="entry name" value="PRP1_N"/>
    <property type="match status" value="1"/>
</dbReference>
<dbReference type="Pfam" id="PF13432">
    <property type="entry name" value="TPR_16"/>
    <property type="match status" value="1"/>
</dbReference>
<dbReference type="Pfam" id="PF14559">
    <property type="entry name" value="TPR_19"/>
    <property type="match status" value="1"/>
</dbReference>
<dbReference type="SMART" id="SM00386">
    <property type="entry name" value="HAT"/>
    <property type="match status" value="13"/>
</dbReference>
<dbReference type="SMART" id="SM00028">
    <property type="entry name" value="TPR"/>
    <property type="match status" value="2"/>
</dbReference>
<dbReference type="SUPFAM" id="SSF48452">
    <property type="entry name" value="TPR-like"/>
    <property type="match status" value="4"/>
</dbReference>
<dbReference type="PROSITE" id="PS50293">
    <property type="entry name" value="TPR_REGION"/>
    <property type="match status" value="2"/>
</dbReference>
<accession>Q5RCC2</accession>
<proteinExistence type="evidence at transcript level"/>